<keyword id="KW-0119">Carbohydrate metabolism</keyword>
<keyword id="KW-0961">Cell wall biogenesis/degradation</keyword>
<keyword id="KW-0136">Cellulose degradation</keyword>
<keyword id="KW-0325">Glycoprotein</keyword>
<keyword id="KW-0326">Glycosidase</keyword>
<keyword id="KW-0378">Hydrolase</keyword>
<keyword id="KW-0624">Polysaccharide degradation</keyword>
<keyword id="KW-1185">Reference proteome</keyword>
<keyword id="KW-0964">Secreted</keyword>
<keyword id="KW-0732">Signal</keyword>
<name>GUN13_ARATH</name>
<feature type="signal peptide" evidence="2">
    <location>
        <begin position="1"/>
        <end position="26"/>
    </location>
</feature>
<feature type="chain" id="PRO_0000249265" description="Endoglucanase 13">
    <location>
        <begin position="27"/>
        <end position="490"/>
    </location>
</feature>
<feature type="active site" description="Nucleophile" evidence="4">
    <location>
        <position position="86"/>
    </location>
</feature>
<feature type="active site" evidence="3">
    <location>
        <position position="412"/>
    </location>
</feature>
<feature type="active site" evidence="3">
    <location>
        <position position="464"/>
    </location>
</feature>
<feature type="active site" evidence="3">
    <location>
        <position position="473"/>
    </location>
</feature>
<feature type="glycosylation site" description="N-linked (GlcNAc...) asparagine" evidence="2">
    <location>
        <position position="6"/>
    </location>
</feature>
<dbReference type="EC" id="3.2.1.4"/>
<dbReference type="EMBL" id="AC003672">
    <property type="protein sequence ID" value="AAC27457.1"/>
    <property type="molecule type" value="Genomic_DNA"/>
</dbReference>
<dbReference type="EMBL" id="AC004521">
    <property type="protein sequence ID" value="AAM14964.1"/>
    <property type="molecule type" value="Genomic_DNA"/>
</dbReference>
<dbReference type="EMBL" id="CP002685">
    <property type="protein sequence ID" value="AEC10437.1"/>
    <property type="molecule type" value="Genomic_DNA"/>
</dbReference>
<dbReference type="PIR" id="T02411">
    <property type="entry name" value="T02411"/>
</dbReference>
<dbReference type="RefSeq" id="NP_181983.1">
    <property type="nucleotide sequence ID" value="NM_130019.1"/>
</dbReference>
<dbReference type="SMR" id="O64890"/>
<dbReference type="FunCoup" id="O64890">
    <property type="interactions" value="190"/>
</dbReference>
<dbReference type="STRING" id="3702.O64890"/>
<dbReference type="CAZy" id="GH9">
    <property type="family name" value="Glycoside Hydrolase Family 9"/>
</dbReference>
<dbReference type="GlyGen" id="O64890">
    <property type="glycosylation" value="1 site"/>
</dbReference>
<dbReference type="PaxDb" id="3702-AT2G44550.1"/>
<dbReference type="ProteomicsDB" id="247265"/>
<dbReference type="EnsemblPlants" id="AT2G44550.1">
    <property type="protein sequence ID" value="AT2G44550.1"/>
    <property type="gene ID" value="AT2G44550"/>
</dbReference>
<dbReference type="GeneID" id="819063"/>
<dbReference type="Gramene" id="AT2G44550.1">
    <property type="protein sequence ID" value="AT2G44550.1"/>
    <property type="gene ID" value="AT2G44550"/>
</dbReference>
<dbReference type="KEGG" id="ath:AT2G44550"/>
<dbReference type="Araport" id="AT2G44550"/>
<dbReference type="TAIR" id="AT2G44550">
    <property type="gene designation" value="GH9B10"/>
</dbReference>
<dbReference type="eggNOG" id="ENOG502QRF6">
    <property type="taxonomic scope" value="Eukaryota"/>
</dbReference>
<dbReference type="HOGENOM" id="CLU_008926_1_4_1"/>
<dbReference type="InParanoid" id="O64890"/>
<dbReference type="OMA" id="MAIMARI"/>
<dbReference type="PhylomeDB" id="O64890"/>
<dbReference type="BioCyc" id="ARA:AT2G44550-MONOMER"/>
<dbReference type="PRO" id="PR:O64890"/>
<dbReference type="Proteomes" id="UP000006548">
    <property type="component" value="Chromosome 2"/>
</dbReference>
<dbReference type="ExpressionAtlas" id="O64890">
    <property type="expression patterns" value="baseline and differential"/>
</dbReference>
<dbReference type="GO" id="GO:0005576">
    <property type="term" value="C:extracellular region"/>
    <property type="evidence" value="ECO:0007669"/>
    <property type="project" value="UniProtKB-SubCell"/>
</dbReference>
<dbReference type="GO" id="GO:0008810">
    <property type="term" value="F:cellulase activity"/>
    <property type="evidence" value="ECO:0007669"/>
    <property type="project" value="UniProtKB-EC"/>
</dbReference>
<dbReference type="GO" id="GO:0071555">
    <property type="term" value="P:cell wall organization"/>
    <property type="evidence" value="ECO:0007669"/>
    <property type="project" value="UniProtKB-KW"/>
</dbReference>
<dbReference type="GO" id="GO:0030245">
    <property type="term" value="P:cellulose catabolic process"/>
    <property type="evidence" value="ECO:0007669"/>
    <property type="project" value="UniProtKB-KW"/>
</dbReference>
<dbReference type="FunFam" id="1.50.10.10:FF:000020">
    <property type="entry name" value="Endoglucanase"/>
    <property type="match status" value="1"/>
</dbReference>
<dbReference type="Gene3D" id="1.50.10.10">
    <property type="match status" value="1"/>
</dbReference>
<dbReference type="InterPro" id="IPR008928">
    <property type="entry name" value="6-hairpin_glycosidase_sf"/>
</dbReference>
<dbReference type="InterPro" id="IPR012341">
    <property type="entry name" value="6hp_glycosidase-like_sf"/>
</dbReference>
<dbReference type="InterPro" id="IPR001701">
    <property type="entry name" value="Glyco_hydro_9"/>
</dbReference>
<dbReference type="InterPro" id="IPR018221">
    <property type="entry name" value="Glyco_hydro_9_His_AS"/>
</dbReference>
<dbReference type="PANTHER" id="PTHR22298">
    <property type="entry name" value="ENDO-1,4-BETA-GLUCANASE"/>
    <property type="match status" value="1"/>
</dbReference>
<dbReference type="Pfam" id="PF00759">
    <property type="entry name" value="Glyco_hydro_9"/>
    <property type="match status" value="1"/>
</dbReference>
<dbReference type="SUPFAM" id="SSF48208">
    <property type="entry name" value="Six-hairpin glycosidases"/>
    <property type="match status" value="1"/>
</dbReference>
<dbReference type="PROSITE" id="PS60032">
    <property type="entry name" value="GH9_1"/>
    <property type="match status" value="1"/>
</dbReference>
<dbReference type="PROSITE" id="PS00592">
    <property type="entry name" value="GH9_2"/>
    <property type="match status" value="1"/>
</dbReference>
<reference key="1">
    <citation type="journal article" date="1999" name="Nature">
        <title>Sequence and analysis of chromosome 2 of the plant Arabidopsis thaliana.</title>
        <authorList>
            <person name="Lin X."/>
            <person name="Kaul S."/>
            <person name="Rounsley S.D."/>
            <person name="Shea T.P."/>
            <person name="Benito M.-I."/>
            <person name="Town C.D."/>
            <person name="Fujii C.Y."/>
            <person name="Mason T.M."/>
            <person name="Bowman C.L."/>
            <person name="Barnstead M.E."/>
            <person name="Feldblyum T.V."/>
            <person name="Buell C.R."/>
            <person name="Ketchum K.A."/>
            <person name="Lee J.J."/>
            <person name="Ronning C.M."/>
            <person name="Koo H.L."/>
            <person name="Moffat K.S."/>
            <person name="Cronin L.A."/>
            <person name="Shen M."/>
            <person name="Pai G."/>
            <person name="Van Aken S."/>
            <person name="Umayam L."/>
            <person name="Tallon L.J."/>
            <person name="Gill J.E."/>
            <person name="Adams M.D."/>
            <person name="Carrera A.J."/>
            <person name="Creasy T.H."/>
            <person name="Goodman H.M."/>
            <person name="Somerville C.R."/>
            <person name="Copenhaver G.P."/>
            <person name="Preuss D."/>
            <person name="Nierman W.C."/>
            <person name="White O."/>
            <person name="Eisen J.A."/>
            <person name="Salzberg S.L."/>
            <person name="Fraser C.M."/>
            <person name="Venter J.C."/>
        </authorList>
    </citation>
    <scope>NUCLEOTIDE SEQUENCE [LARGE SCALE GENOMIC DNA]</scope>
    <source>
        <strain>cv. Columbia</strain>
    </source>
</reference>
<reference key="2">
    <citation type="journal article" date="2017" name="Plant J.">
        <title>Araport11: a complete reannotation of the Arabidopsis thaliana reference genome.</title>
        <authorList>
            <person name="Cheng C.Y."/>
            <person name="Krishnakumar V."/>
            <person name="Chan A.P."/>
            <person name="Thibaud-Nissen F."/>
            <person name="Schobel S."/>
            <person name="Town C.D."/>
        </authorList>
    </citation>
    <scope>GENOME REANNOTATION</scope>
    <source>
        <strain>cv. Columbia</strain>
    </source>
</reference>
<reference key="3">
    <citation type="journal article" date="2004" name="J. Mol. Evol.">
        <title>Phylogenetic analysis of the plant endo-beta-1,4-glucanase gene family.</title>
        <authorList>
            <person name="Libertini E."/>
            <person name="Li Y."/>
            <person name="McQueen-Mason S.J."/>
        </authorList>
    </citation>
    <scope>GENE FAMILY</scope>
</reference>
<gene>
    <name type="ordered locus">At2g44550</name>
    <name type="ORF">F4I1.55</name>
</gene>
<comment type="catalytic activity">
    <reaction>
        <text>Endohydrolysis of (1-&gt;4)-beta-D-glucosidic linkages in cellulose, lichenin and cereal beta-D-glucans.</text>
        <dbReference type="EC" id="3.2.1.4"/>
    </reaction>
</comment>
<comment type="subcellular location">
    <subcellularLocation>
        <location evidence="1">Secreted</location>
    </subcellularLocation>
</comment>
<comment type="similarity">
    <text evidence="4 5">Belongs to the glycosyl hydrolase 9 (cellulase E) family.</text>
</comment>
<protein>
    <recommendedName>
        <fullName>Endoglucanase 13</fullName>
        <ecNumber>3.2.1.4</ecNumber>
    </recommendedName>
    <alternativeName>
        <fullName>Endo-1,4-beta glucanase 13</fullName>
    </alternativeName>
</protein>
<evidence type="ECO:0000250" key="1"/>
<evidence type="ECO:0000255" key="2"/>
<evidence type="ECO:0000255" key="3">
    <source>
        <dbReference type="PROSITE-ProRule" id="PRU10059"/>
    </source>
</evidence>
<evidence type="ECO:0000255" key="4">
    <source>
        <dbReference type="PROSITE-ProRule" id="PRU10140"/>
    </source>
</evidence>
<evidence type="ECO:0000305" key="5"/>
<proteinExistence type="evidence at transcript level"/>
<accession>O64890</accession>
<sequence length="490" mass="53448">MSQLKNGSSQCLWTSICIVLIVMSMAREAVSTNYAEALKNSLLYFEAQRSGKLPPNQRVTWRGDSALRDGSDAHIDLTGGYYDAGDNMKFGFPLAFTTTMLAWSNIEMASQLRAHHEKGNALRALKWATDYLIKAHPQPNVLYGQVGEGNSDHKCWMRPEDMTTPRTSYRIDAQHPGSDLAGETAAAMAAASIAFAPSDKAYANILIGHAKDLFAFAKAHRGLYQNSIPNAGGFYASSGYEDELLWAAAWLHRATNDQIYLDYLTEAETGGPRTVFAWDDKFVGAQVLVAKLALEGKVESSEQIVEYKSMAEQFICNCAQKGDNNVKKTPGGLLYFLPWNNLQYTTAATFVLSAYSKYLEAAKASIDCPDGALQASDLLQVARSQVDYILGSNPQKMSYMVGVGTNYPKKPHHRAASIVSIRQDKTPVTCSGGYDKWYNNPAPNPNVLAGAVVGGPDDNDVYGDERSNFQQAEPATVTTAPLVGVLALVF</sequence>
<organism>
    <name type="scientific">Arabidopsis thaliana</name>
    <name type="common">Mouse-ear cress</name>
    <dbReference type="NCBI Taxonomy" id="3702"/>
    <lineage>
        <taxon>Eukaryota</taxon>
        <taxon>Viridiplantae</taxon>
        <taxon>Streptophyta</taxon>
        <taxon>Embryophyta</taxon>
        <taxon>Tracheophyta</taxon>
        <taxon>Spermatophyta</taxon>
        <taxon>Magnoliopsida</taxon>
        <taxon>eudicotyledons</taxon>
        <taxon>Gunneridae</taxon>
        <taxon>Pentapetalae</taxon>
        <taxon>rosids</taxon>
        <taxon>malvids</taxon>
        <taxon>Brassicales</taxon>
        <taxon>Brassicaceae</taxon>
        <taxon>Camelineae</taxon>
        <taxon>Arabidopsis</taxon>
    </lineage>
</organism>